<dbReference type="EC" id="4.1.1.39" evidence="1"/>
<dbReference type="EMBL" id="X83627">
    <property type="protein sequence ID" value="CAA58606.1"/>
    <property type="molecule type" value="Genomic_DNA"/>
</dbReference>
<dbReference type="GO" id="GO:0009507">
    <property type="term" value="C:chloroplast"/>
    <property type="evidence" value="ECO:0007669"/>
    <property type="project" value="UniProtKB-SubCell"/>
</dbReference>
<dbReference type="GO" id="GO:0000287">
    <property type="term" value="F:magnesium ion binding"/>
    <property type="evidence" value="ECO:0007669"/>
    <property type="project" value="InterPro"/>
</dbReference>
<dbReference type="GO" id="GO:0004497">
    <property type="term" value="F:monooxygenase activity"/>
    <property type="evidence" value="ECO:0007669"/>
    <property type="project" value="UniProtKB-KW"/>
</dbReference>
<dbReference type="GO" id="GO:0016984">
    <property type="term" value="F:ribulose-bisphosphate carboxylase activity"/>
    <property type="evidence" value="ECO:0007669"/>
    <property type="project" value="UniProtKB-EC"/>
</dbReference>
<dbReference type="GO" id="GO:0009853">
    <property type="term" value="P:photorespiration"/>
    <property type="evidence" value="ECO:0007669"/>
    <property type="project" value="UniProtKB-KW"/>
</dbReference>
<dbReference type="GO" id="GO:0019253">
    <property type="term" value="P:reductive pentose-phosphate cycle"/>
    <property type="evidence" value="ECO:0007669"/>
    <property type="project" value="UniProtKB-KW"/>
</dbReference>
<dbReference type="CDD" id="cd08212">
    <property type="entry name" value="RuBisCO_large_I"/>
    <property type="match status" value="1"/>
</dbReference>
<dbReference type="FunFam" id="3.20.20.110:FF:000001">
    <property type="entry name" value="Ribulose bisphosphate carboxylase large chain"/>
    <property type="match status" value="1"/>
</dbReference>
<dbReference type="FunFam" id="3.30.70.150:FF:000001">
    <property type="entry name" value="Ribulose bisphosphate carboxylase large chain"/>
    <property type="match status" value="1"/>
</dbReference>
<dbReference type="Gene3D" id="3.20.20.110">
    <property type="entry name" value="Ribulose bisphosphate carboxylase, large subunit, C-terminal domain"/>
    <property type="match status" value="1"/>
</dbReference>
<dbReference type="Gene3D" id="3.30.70.150">
    <property type="entry name" value="RuBisCO large subunit, N-terminal domain"/>
    <property type="match status" value="1"/>
</dbReference>
<dbReference type="HAMAP" id="MF_01338">
    <property type="entry name" value="RuBisCO_L_type1"/>
    <property type="match status" value="1"/>
</dbReference>
<dbReference type="InterPro" id="IPR033966">
    <property type="entry name" value="RuBisCO"/>
</dbReference>
<dbReference type="InterPro" id="IPR020878">
    <property type="entry name" value="RuBisCo_large_chain_AS"/>
</dbReference>
<dbReference type="InterPro" id="IPR000685">
    <property type="entry name" value="RuBisCO_lsu_C"/>
</dbReference>
<dbReference type="InterPro" id="IPR036376">
    <property type="entry name" value="RuBisCO_lsu_C_sf"/>
</dbReference>
<dbReference type="InterPro" id="IPR017443">
    <property type="entry name" value="RuBisCO_lsu_fd_N"/>
</dbReference>
<dbReference type="InterPro" id="IPR036422">
    <property type="entry name" value="RuBisCO_lsu_N_sf"/>
</dbReference>
<dbReference type="InterPro" id="IPR020888">
    <property type="entry name" value="RuBisCO_lsuI"/>
</dbReference>
<dbReference type="NCBIfam" id="NF003252">
    <property type="entry name" value="PRK04208.1"/>
    <property type="match status" value="1"/>
</dbReference>
<dbReference type="PANTHER" id="PTHR42704">
    <property type="entry name" value="RIBULOSE BISPHOSPHATE CARBOXYLASE"/>
    <property type="match status" value="1"/>
</dbReference>
<dbReference type="PANTHER" id="PTHR42704:SF15">
    <property type="entry name" value="RIBULOSE BISPHOSPHATE CARBOXYLASE LARGE CHAIN"/>
    <property type="match status" value="1"/>
</dbReference>
<dbReference type="Pfam" id="PF00016">
    <property type="entry name" value="RuBisCO_large"/>
    <property type="match status" value="1"/>
</dbReference>
<dbReference type="Pfam" id="PF02788">
    <property type="entry name" value="RuBisCO_large_N"/>
    <property type="match status" value="1"/>
</dbReference>
<dbReference type="SFLD" id="SFLDG01052">
    <property type="entry name" value="RuBisCO"/>
    <property type="match status" value="1"/>
</dbReference>
<dbReference type="SFLD" id="SFLDS00014">
    <property type="entry name" value="RuBisCO"/>
    <property type="match status" value="1"/>
</dbReference>
<dbReference type="SFLD" id="SFLDG00301">
    <property type="entry name" value="RuBisCO-like_proteins"/>
    <property type="match status" value="1"/>
</dbReference>
<dbReference type="SUPFAM" id="SSF51649">
    <property type="entry name" value="RuBisCo, C-terminal domain"/>
    <property type="match status" value="1"/>
</dbReference>
<dbReference type="SUPFAM" id="SSF54966">
    <property type="entry name" value="RuBisCO, large subunit, small (N-terminal) domain"/>
    <property type="match status" value="1"/>
</dbReference>
<dbReference type="PROSITE" id="PS00157">
    <property type="entry name" value="RUBISCO_LARGE"/>
    <property type="match status" value="1"/>
</dbReference>
<keyword id="KW-0113">Calvin cycle</keyword>
<keyword id="KW-0120">Carbon dioxide fixation</keyword>
<keyword id="KW-0150">Chloroplast</keyword>
<keyword id="KW-1015">Disulfide bond</keyword>
<keyword id="KW-0456">Lyase</keyword>
<keyword id="KW-0460">Magnesium</keyword>
<keyword id="KW-0479">Metal-binding</keyword>
<keyword id="KW-0488">Methylation</keyword>
<keyword id="KW-0503">Monooxygenase</keyword>
<keyword id="KW-0560">Oxidoreductase</keyword>
<keyword id="KW-0601">Photorespiration</keyword>
<keyword id="KW-0602">Photosynthesis</keyword>
<keyword id="KW-0934">Plastid</keyword>
<evidence type="ECO:0000255" key="1">
    <source>
        <dbReference type="HAMAP-Rule" id="MF_01338"/>
    </source>
</evidence>
<protein>
    <recommendedName>
        <fullName evidence="1">Ribulose bisphosphate carboxylase large chain</fullName>
        <shortName evidence="1">RuBisCO large subunit</shortName>
        <ecNumber evidence="1">4.1.1.39</ecNumber>
    </recommendedName>
</protein>
<gene>
    <name evidence="1" type="primary">rbcL</name>
</gene>
<comment type="function">
    <text evidence="1">RuBisCO catalyzes two reactions: the carboxylation of D-ribulose 1,5-bisphosphate, the primary event in carbon dioxide fixation, as well as the oxidative fragmentation of the pentose substrate in the photorespiration process. Both reactions occur simultaneously and in competition at the same active site.</text>
</comment>
<comment type="catalytic activity">
    <reaction evidence="1">
        <text>2 (2R)-3-phosphoglycerate + 2 H(+) = D-ribulose 1,5-bisphosphate + CO2 + H2O</text>
        <dbReference type="Rhea" id="RHEA:23124"/>
        <dbReference type="ChEBI" id="CHEBI:15377"/>
        <dbReference type="ChEBI" id="CHEBI:15378"/>
        <dbReference type="ChEBI" id="CHEBI:16526"/>
        <dbReference type="ChEBI" id="CHEBI:57870"/>
        <dbReference type="ChEBI" id="CHEBI:58272"/>
        <dbReference type="EC" id="4.1.1.39"/>
    </reaction>
</comment>
<comment type="catalytic activity">
    <reaction evidence="1">
        <text>D-ribulose 1,5-bisphosphate + O2 = 2-phosphoglycolate + (2R)-3-phosphoglycerate + 2 H(+)</text>
        <dbReference type="Rhea" id="RHEA:36631"/>
        <dbReference type="ChEBI" id="CHEBI:15378"/>
        <dbReference type="ChEBI" id="CHEBI:15379"/>
        <dbReference type="ChEBI" id="CHEBI:57870"/>
        <dbReference type="ChEBI" id="CHEBI:58033"/>
        <dbReference type="ChEBI" id="CHEBI:58272"/>
    </reaction>
</comment>
<comment type="cofactor">
    <cofactor evidence="1">
        <name>Mg(2+)</name>
        <dbReference type="ChEBI" id="CHEBI:18420"/>
    </cofactor>
    <text evidence="1">Binds 1 Mg(2+) ion per subunit.</text>
</comment>
<comment type="subunit">
    <text evidence="1">Heterohexadecamer of 8 large chains and 8 small chains; disulfide-linked. The disulfide link is formed within the large subunit homodimers.</text>
</comment>
<comment type="subcellular location">
    <subcellularLocation>
        <location>Plastid</location>
        <location>Chloroplast</location>
    </subcellularLocation>
</comment>
<comment type="PTM">
    <text evidence="1">The disulfide bond which can form in the large chain dimeric partners within the hexadecamer appears to be associated with oxidative stress and protein turnover.</text>
</comment>
<comment type="miscellaneous">
    <text evidence="1">The basic functional RuBisCO is composed of a large chain homodimer in a 'head-to-tail' conformation. In form I RuBisCO this homodimer is arranged in a barrel-like tetramer with the small subunits forming a tetrameric 'cap' on each end of the 'barrel'.</text>
</comment>
<comment type="similarity">
    <text evidence="1">Belongs to the RuBisCO large chain family. Type I subfamily.</text>
</comment>
<reference key="1">
    <citation type="journal article" date="1995" name="Ann. Mo. Bot. Gard.">
        <title>Subfamilial and tribal relationships in the Rubiaceae based on rbcL sequence data.</title>
        <authorList>
            <person name="Bremer B."/>
            <person name="Andreasen K."/>
            <person name="Olsson D."/>
        </authorList>
    </citation>
    <scope>NUCLEOTIDE SEQUENCE [GENOMIC DNA]</scope>
</reference>
<feature type="chain" id="PRO_0000062389" description="Ribulose bisphosphate carboxylase large chain">
    <location>
        <begin position="1" status="less than"/>
        <end position="469"/>
    </location>
</feature>
<feature type="active site" description="Proton acceptor" evidence="1">
    <location>
        <position position="166"/>
    </location>
</feature>
<feature type="active site" description="Proton acceptor" evidence="1">
    <location>
        <position position="285"/>
    </location>
</feature>
<feature type="binding site" description="in homodimeric partner" evidence="1">
    <location>
        <position position="114"/>
    </location>
    <ligand>
        <name>substrate</name>
    </ligand>
</feature>
<feature type="binding site" evidence="1">
    <location>
        <position position="164"/>
    </location>
    <ligand>
        <name>substrate</name>
    </ligand>
</feature>
<feature type="binding site" evidence="1">
    <location>
        <position position="168"/>
    </location>
    <ligand>
        <name>substrate</name>
    </ligand>
</feature>
<feature type="binding site" description="via carbamate group" evidence="1">
    <location>
        <position position="192"/>
    </location>
    <ligand>
        <name>Mg(2+)</name>
        <dbReference type="ChEBI" id="CHEBI:18420"/>
    </ligand>
</feature>
<feature type="binding site" evidence="1">
    <location>
        <position position="194"/>
    </location>
    <ligand>
        <name>Mg(2+)</name>
        <dbReference type="ChEBI" id="CHEBI:18420"/>
    </ligand>
</feature>
<feature type="binding site" evidence="1">
    <location>
        <position position="195"/>
    </location>
    <ligand>
        <name>Mg(2+)</name>
        <dbReference type="ChEBI" id="CHEBI:18420"/>
    </ligand>
</feature>
<feature type="binding site" evidence="1">
    <location>
        <position position="286"/>
    </location>
    <ligand>
        <name>substrate</name>
    </ligand>
</feature>
<feature type="binding site" evidence="1">
    <location>
        <position position="318"/>
    </location>
    <ligand>
        <name>substrate</name>
    </ligand>
</feature>
<feature type="binding site" evidence="1">
    <location>
        <position position="370"/>
    </location>
    <ligand>
        <name>substrate</name>
    </ligand>
</feature>
<feature type="site" description="Transition state stabilizer" evidence="1">
    <location>
        <position position="325"/>
    </location>
</feature>
<feature type="modified residue" description="N6,N6,N6-trimethyllysine" evidence="1">
    <location>
        <position position="5"/>
    </location>
</feature>
<feature type="modified residue" description="N6-carboxylysine" evidence="1">
    <location>
        <position position="192"/>
    </location>
</feature>
<feature type="disulfide bond" description="Interchain; in linked form" evidence="1">
    <location>
        <position position="238"/>
    </location>
</feature>
<feature type="non-terminal residue">
    <location>
        <position position="1"/>
    </location>
</feature>
<proteinExistence type="inferred from homology"/>
<accession>Q31750</accession>
<geneLocation type="chloroplast"/>
<name>RBL_CALCA</name>
<organism>
    <name type="scientific">Calycophyllum candidissimum</name>
    <name type="common">Degame lemonwood tree</name>
    <name type="synonym">Macrocnemum candidissimum</name>
    <dbReference type="NCBI Taxonomy" id="43450"/>
    <lineage>
        <taxon>Eukaryota</taxon>
        <taxon>Viridiplantae</taxon>
        <taxon>Streptophyta</taxon>
        <taxon>Embryophyta</taxon>
        <taxon>Tracheophyta</taxon>
        <taxon>Spermatophyta</taxon>
        <taxon>Magnoliopsida</taxon>
        <taxon>eudicotyledons</taxon>
        <taxon>Gunneridae</taxon>
        <taxon>Pentapetalae</taxon>
        <taxon>asterids</taxon>
        <taxon>lamiids</taxon>
        <taxon>Gentianales</taxon>
        <taxon>Rubiaceae</taxon>
        <taxon>Ixoroideae</taxon>
        <taxon>Condamineeae</taxon>
        <taxon>Calycophyllum</taxon>
    </lineage>
</organism>
<sequence>SVGFKAGVKEYKLTYYTPEYETKDTDILAAFRVTPQPGVPPEEAGXAVXXESSTGTWTAVWTDGLTSLDRYKGRCYXIEPVPGEEDQYIAYVAYPLDXFEEGSVTNMFTSIVGNVFGFKALXALRLEDLRIPPAYIKTFEGPPHGIQVERDKLNKYGRPLLXCTIKPKLGLSAKNYGRACYECLRGGLDFTKDDENVNSQPFMRWRDRFLFCAEAIYKAQAETGEIKGHYLNATAGTCEEMIKRAVFARELGVPIVMHDYLTGGFTANTSLAHYCRDNGLLLHIHRAMHAVIDRQKNHGIHFRVLAKALRMSGGDHIHSGTVVGKLEGERDITLGFVDLLRDDFIEKDRSRGIYFTQDWSSLPGVLPVXSGGIHVXHMPALTEIFGDDSVXXFGGGTLGHPWGNAPGAVANRVSLEACVKARNEGRDLAAEGNEIIREASKWSPELAAACEVWKEIRFNFAAVDTLDPS</sequence>